<feature type="chain" id="PRO_1000187474" description="Chromosome partition protein MukB">
    <location>
        <begin position="1"/>
        <end position="1486"/>
    </location>
</feature>
<feature type="region of interest" description="Flexible hinge" evidence="1">
    <location>
        <begin position="666"/>
        <end position="783"/>
    </location>
</feature>
<feature type="coiled-coil region" evidence="1">
    <location>
        <begin position="326"/>
        <end position="418"/>
    </location>
</feature>
<feature type="coiled-coil region" evidence="1">
    <location>
        <begin position="444"/>
        <end position="480"/>
    </location>
</feature>
<feature type="coiled-coil region" evidence="1">
    <location>
        <begin position="509"/>
        <end position="603"/>
    </location>
</feature>
<feature type="coiled-coil region" evidence="1">
    <location>
        <begin position="835"/>
        <end position="923"/>
    </location>
</feature>
<feature type="coiled-coil region" evidence="1">
    <location>
        <begin position="977"/>
        <end position="1115"/>
    </location>
</feature>
<feature type="coiled-coil region" evidence="1">
    <location>
        <begin position="1209"/>
        <end position="1266"/>
    </location>
</feature>
<feature type="binding site" evidence="1">
    <location>
        <begin position="34"/>
        <end position="41"/>
    </location>
    <ligand>
        <name>ATP</name>
        <dbReference type="ChEBI" id="CHEBI:30616"/>
    </ligand>
</feature>
<keyword id="KW-0067">ATP-binding</keyword>
<keyword id="KW-0131">Cell cycle</keyword>
<keyword id="KW-0132">Cell division</keyword>
<keyword id="KW-0159">Chromosome partition</keyword>
<keyword id="KW-0175">Coiled coil</keyword>
<keyword id="KW-0963">Cytoplasm</keyword>
<keyword id="KW-0226">DNA condensation</keyword>
<keyword id="KW-0238">DNA-binding</keyword>
<keyword id="KW-0547">Nucleotide-binding</keyword>
<proteinExistence type="inferred from homology"/>
<name>MUKB_ECOLU</name>
<reference key="1">
    <citation type="journal article" date="2009" name="PLoS Genet.">
        <title>Organised genome dynamics in the Escherichia coli species results in highly diverse adaptive paths.</title>
        <authorList>
            <person name="Touchon M."/>
            <person name="Hoede C."/>
            <person name="Tenaillon O."/>
            <person name="Barbe V."/>
            <person name="Baeriswyl S."/>
            <person name="Bidet P."/>
            <person name="Bingen E."/>
            <person name="Bonacorsi S."/>
            <person name="Bouchier C."/>
            <person name="Bouvet O."/>
            <person name="Calteau A."/>
            <person name="Chiapello H."/>
            <person name="Clermont O."/>
            <person name="Cruveiller S."/>
            <person name="Danchin A."/>
            <person name="Diard M."/>
            <person name="Dossat C."/>
            <person name="Karoui M.E."/>
            <person name="Frapy E."/>
            <person name="Garry L."/>
            <person name="Ghigo J.M."/>
            <person name="Gilles A.M."/>
            <person name="Johnson J."/>
            <person name="Le Bouguenec C."/>
            <person name="Lescat M."/>
            <person name="Mangenot S."/>
            <person name="Martinez-Jehanne V."/>
            <person name="Matic I."/>
            <person name="Nassif X."/>
            <person name="Oztas S."/>
            <person name="Petit M.A."/>
            <person name="Pichon C."/>
            <person name="Rouy Z."/>
            <person name="Ruf C.S."/>
            <person name="Schneider D."/>
            <person name="Tourret J."/>
            <person name="Vacherie B."/>
            <person name="Vallenet D."/>
            <person name="Medigue C."/>
            <person name="Rocha E.P.C."/>
            <person name="Denamur E."/>
        </authorList>
    </citation>
    <scope>NUCLEOTIDE SEQUENCE [LARGE SCALE GENOMIC DNA]</scope>
    <source>
        <strain>UMN026 / ExPEC</strain>
    </source>
</reference>
<comment type="function">
    <text evidence="1">Plays a central role in chromosome condensation, segregation and cell cycle progression. Functions as a homodimer, which is essential for chromosome partition. Involved in negative DNA supercoiling in vivo, and by this means organize and compact chromosomes. May achieve or facilitate chromosome segregation by condensation DNA from both sides of a centrally located replisome during cell division.</text>
</comment>
<comment type="subunit">
    <text evidence="1">Homodimerization via its hinge domain. Binds to DNA via its C-terminal region. Interacts, and probably forms a ternary complex, with MukE and MukF via its C-terminal region. The complex formation is stimulated by calcium or magnesium. Interacts with tubulin-related protein FtsZ.</text>
</comment>
<comment type="subcellular location">
    <subcellularLocation>
        <location evidence="1">Cytoplasm</location>
        <location evidence="1">Nucleoid</location>
    </subcellularLocation>
    <text evidence="1">Restricted to the nucleoid region.</text>
</comment>
<comment type="domain">
    <text evidence="1">The hinge domain, which separates the large intramolecular coiled coil regions, allows the homodimerization, forming a V-shaped homodimer.</text>
</comment>
<comment type="similarity">
    <text evidence="1">Belongs to the SMC family. MukB subfamily.</text>
</comment>
<sequence length="1486" mass="170158">MIERGKFRSLTLINWNGFFARTFDLDELVTTLSGGNGAGKSTTMAAFVTALIPDLTLLHFRNTTEAGATSGSRDKGLHGKLKAGVCYSMLDTINSRHQRVVVGVRLQQVAGRDRKVDIKPFAIQGLPMSVLPTQLVTETLNERQARVLPLNELKDKLEAMEGVQFKQFNSITDYHSLMFDLGIIARRLRSASDRSKFYRLIEASLYGGISSAITRSLRDYLLPENSGVRKAFQDMEAALRENRMTLEAIRVTQSDRDLFKHLISEATNYVAADYMRHANERRVHLDKALEFRRELHTSRQQLAAEQYKHVDMARELAEHNGAEGDLEADYQAASDHLNLVQTALRQQEKIERYEADLDELQIRLEEQNEVVAEAIERQEENEARAEAAELEVDELKSQLADYQQALDVQQTRAIQYNQAVAALNRAKELCHLPDLTADSAAEWLETFQAKELEATEKMLSLEQKMSMAQTAHSQFEQAYQLVVAINGPLARNEAWDVARELLREGVDQRHLAEQVQPLRMRLSELEQRLREQQEAERLLADFCKRQGKNFDIDELEALHQELEARIASLSDSVSNAREERMALRQEQEQLQSRIQSLMQRAPVWLAAQNSLNQLSEQCGEEFSSSQDVTEYLQQLLEREREAIVERDEVGARKNAVDEEIERLSQPGGSEDQRLNALAERFGGVLLSEIYDDVSLEDAPYFSALYGPSRHAIVVPDLSQVTEHLEGLTDCPEDLYLIEGDPQSFDDSVFSVDELEKAVVVKIADRQWRYSRFPEVPLFGRAARESRIESLHAEREVLSERFATLSFDVQKTQRLHQAFSRFIGSHLAVAFESDPEAEIRQLNSRRVELERALSNHENDNQQQRIQFEQAKEGVTALNRILPRLNLLADDSLADRVDEIRERLDEAQEAARFVQQFGNQLAKLEPIVSVLQSDPEQFEQLKEDYAYSQQMQRDARQQAFALTEVVQRRAHFSYSDSAEMLSGNSDLNEKLRERLEQAEAERTRAREALRGHAAQLSQYNQVLASLKSSYDTKKELLNDLQRELQDIGVRADSGAEERARIRRDELHAQLSNNRSRRNQLEKALTFCEAEMDNLTRKLRKLERDYFEMREQVVTAKAGWCAVMRMVKDNGVERRLHRRELAYLSADDLRSMSDKALGALRLAVADNEHLRDVLRMSEDPKRPERKIQFFVAVYQHLRERIRQDIIRTDDPVEAIEQMEIELSRLTEELTSREQKLAISSRSVANIIRKTIQREQNRIRMLNQGLQNVSFGQVNSVRLNVNVRETHAMLLDVLSEQHEQHQDLFNSNRLTFSEALAKLYQRLNPQIDMGQRTPQTIGEELLDYRNYLEMEVEVNRGSDGWLRAESGALSTGEAIGTGMSILVMVVQSWEDESRRLRGKDISPCRLLFLDEAARLDARSIATLFELCERLQMQLIIAAPENISPEKGTTYKLVRKVFQNTEHVHVVGLRGFAPQLPETLPGSDEAPSQAS</sequence>
<gene>
    <name evidence="1" type="primary">mukB</name>
    <name type="ordered locus">ECUMN_1118</name>
</gene>
<dbReference type="EMBL" id="CU928163">
    <property type="protein sequence ID" value="CAR12327.1"/>
    <property type="molecule type" value="Genomic_DNA"/>
</dbReference>
<dbReference type="RefSeq" id="WP_000572624.1">
    <property type="nucleotide sequence ID" value="NC_011751.1"/>
</dbReference>
<dbReference type="RefSeq" id="YP_002411871.1">
    <property type="nucleotide sequence ID" value="NC_011751.1"/>
</dbReference>
<dbReference type="SMR" id="B7N391"/>
<dbReference type="STRING" id="585056.ECUMN_1118"/>
<dbReference type="KEGG" id="eum:ECUMN_1118"/>
<dbReference type="PATRIC" id="fig|585056.7.peg.1312"/>
<dbReference type="HOGENOM" id="CLU_004430_0_0_6"/>
<dbReference type="Proteomes" id="UP000007097">
    <property type="component" value="Chromosome"/>
</dbReference>
<dbReference type="GO" id="GO:0005737">
    <property type="term" value="C:cytoplasm"/>
    <property type="evidence" value="ECO:0007669"/>
    <property type="project" value="UniProtKB-UniRule"/>
</dbReference>
<dbReference type="GO" id="GO:0009295">
    <property type="term" value="C:nucleoid"/>
    <property type="evidence" value="ECO:0007669"/>
    <property type="project" value="UniProtKB-SubCell"/>
</dbReference>
<dbReference type="GO" id="GO:0005524">
    <property type="term" value="F:ATP binding"/>
    <property type="evidence" value="ECO:0007669"/>
    <property type="project" value="UniProtKB-UniRule"/>
</dbReference>
<dbReference type="GO" id="GO:0003677">
    <property type="term" value="F:DNA binding"/>
    <property type="evidence" value="ECO:0007669"/>
    <property type="project" value="UniProtKB-UniRule"/>
</dbReference>
<dbReference type="GO" id="GO:0051301">
    <property type="term" value="P:cell division"/>
    <property type="evidence" value="ECO:0007669"/>
    <property type="project" value="UniProtKB-KW"/>
</dbReference>
<dbReference type="GO" id="GO:0030261">
    <property type="term" value="P:chromosome condensation"/>
    <property type="evidence" value="ECO:0007669"/>
    <property type="project" value="UniProtKB-KW"/>
</dbReference>
<dbReference type="GO" id="GO:0007059">
    <property type="term" value="P:chromosome segregation"/>
    <property type="evidence" value="ECO:0007669"/>
    <property type="project" value="UniProtKB-UniRule"/>
</dbReference>
<dbReference type="GO" id="GO:0006260">
    <property type="term" value="P:DNA replication"/>
    <property type="evidence" value="ECO:0007669"/>
    <property type="project" value="UniProtKB-UniRule"/>
</dbReference>
<dbReference type="FunFam" id="3.30.70.3500:FF:000001">
    <property type="entry name" value="Chromosome partition protein MukB"/>
    <property type="match status" value="1"/>
</dbReference>
<dbReference type="FunFam" id="3.40.1140.10:FF:000001">
    <property type="entry name" value="Chromosome partition protein MukB"/>
    <property type="match status" value="1"/>
</dbReference>
<dbReference type="FunFam" id="3.40.1140.10:FF:000002">
    <property type="entry name" value="Chromosome partition protein MukB"/>
    <property type="match status" value="1"/>
</dbReference>
<dbReference type="Gene3D" id="1.20.58.850">
    <property type="match status" value="1"/>
</dbReference>
<dbReference type="Gene3D" id="3.40.1140.10">
    <property type="match status" value="2"/>
</dbReference>
<dbReference type="Gene3D" id="1.20.5.420">
    <property type="entry name" value="Immunoglobulin FC, subunit C"/>
    <property type="match status" value="1"/>
</dbReference>
<dbReference type="Gene3D" id="3.30.70.3500">
    <property type="entry name" value="MukB, hinge domain"/>
    <property type="match status" value="1"/>
</dbReference>
<dbReference type="HAMAP" id="MF_01800">
    <property type="entry name" value="MukB"/>
    <property type="match status" value="1"/>
</dbReference>
<dbReference type="InterPro" id="IPR012090">
    <property type="entry name" value="MukB"/>
</dbReference>
<dbReference type="InterPro" id="IPR050308">
    <property type="entry name" value="MukB/SMC"/>
</dbReference>
<dbReference type="InterPro" id="IPR032520">
    <property type="entry name" value="MukB_hinge"/>
</dbReference>
<dbReference type="InterPro" id="IPR042501">
    <property type="entry name" value="MukB_hinge_sf"/>
</dbReference>
<dbReference type="InterPro" id="IPR007406">
    <property type="entry name" value="MukB_N_dom"/>
</dbReference>
<dbReference type="InterPro" id="IPR027417">
    <property type="entry name" value="P-loop_NTPase"/>
</dbReference>
<dbReference type="NCBIfam" id="NF003422">
    <property type="entry name" value="PRK04863.1"/>
    <property type="match status" value="1"/>
</dbReference>
<dbReference type="PANTHER" id="PTHR42963">
    <property type="entry name" value="CHROMOSOME PARTITION PROTEIN MUKB"/>
    <property type="match status" value="1"/>
</dbReference>
<dbReference type="PANTHER" id="PTHR42963:SF1">
    <property type="entry name" value="DUF4476 DOMAIN-CONTAINING PROTEIN"/>
    <property type="match status" value="1"/>
</dbReference>
<dbReference type="Pfam" id="PF04310">
    <property type="entry name" value="MukB"/>
    <property type="match status" value="1"/>
</dbReference>
<dbReference type="Pfam" id="PF16330">
    <property type="entry name" value="MukB_hinge"/>
    <property type="match status" value="1"/>
</dbReference>
<dbReference type="Pfam" id="PF13558">
    <property type="entry name" value="SbcC_Walker_B"/>
    <property type="match status" value="1"/>
</dbReference>
<dbReference type="PIRSF" id="PIRSF005246">
    <property type="entry name" value="MukB"/>
    <property type="match status" value="1"/>
</dbReference>
<dbReference type="SUPFAM" id="SSF52540">
    <property type="entry name" value="P-loop containing nucleoside triphosphate hydrolases"/>
    <property type="match status" value="2"/>
</dbReference>
<organism>
    <name type="scientific">Escherichia coli O17:K52:H18 (strain UMN026 / ExPEC)</name>
    <dbReference type="NCBI Taxonomy" id="585056"/>
    <lineage>
        <taxon>Bacteria</taxon>
        <taxon>Pseudomonadati</taxon>
        <taxon>Pseudomonadota</taxon>
        <taxon>Gammaproteobacteria</taxon>
        <taxon>Enterobacterales</taxon>
        <taxon>Enterobacteriaceae</taxon>
        <taxon>Escherichia</taxon>
    </lineage>
</organism>
<accession>B7N391</accession>
<evidence type="ECO:0000255" key="1">
    <source>
        <dbReference type="HAMAP-Rule" id="MF_01800"/>
    </source>
</evidence>
<protein>
    <recommendedName>
        <fullName evidence="1">Chromosome partition protein MukB</fullName>
    </recommendedName>
    <alternativeName>
        <fullName evidence="1">Structural maintenance of chromosome-related protein</fullName>
    </alternativeName>
</protein>